<keyword id="KW-0004">4Fe-4S</keyword>
<keyword id="KW-0997">Cell inner membrane</keyword>
<keyword id="KW-1003">Cell membrane</keyword>
<keyword id="KW-0408">Iron</keyword>
<keyword id="KW-0411">Iron-sulfur</keyword>
<keyword id="KW-0472">Membrane</keyword>
<keyword id="KW-0479">Metal-binding</keyword>
<keyword id="KW-0520">NAD</keyword>
<keyword id="KW-0874">Quinone</keyword>
<keyword id="KW-1185">Reference proteome</keyword>
<keyword id="KW-1278">Translocase</keyword>
<keyword id="KW-0813">Transport</keyword>
<keyword id="KW-0830">Ubiquinone</keyword>
<accession>Q63VN2</accession>
<feature type="chain" id="PRO_0000358380" description="NADH-quinone oxidoreductase subunit B 1">
    <location>
        <begin position="1"/>
        <end position="159"/>
    </location>
</feature>
<feature type="binding site" evidence="2">
    <location>
        <position position="37"/>
    </location>
    <ligand>
        <name>[4Fe-4S] cluster</name>
        <dbReference type="ChEBI" id="CHEBI:49883"/>
    </ligand>
</feature>
<feature type="binding site" evidence="2">
    <location>
        <position position="38"/>
    </location>
    <ligand>
        <name>[4Fe-4S] cluster</name>
        <dbReference type="ChEBI" id="CHEBI:49883"/>
    </ligand>
</feature>
<feature type="binding site" evidence="2">
    <location>
        <position position="102"/>
    </location>
    <ligand>
        <name>[4Fe-4S] cluster</name>
        <dbReference type="ChEBI" id="CHEBI:49883"/>
    </ligand>
</feature>
<feature type="binding site" evidence="2">
    <location>
        <position position="132"/>
    </location>
    <ligand>
        <name>[4Fe-4S] cluster</name>
        <dbReference type="ChEBI" id="CHEBI:49883"/>
    </ligand>
</feature>
<protein>
    <recommendedName>
        <fullName evidence="2">NADH-quinone oxidoreductase subunit B 1</fullName>
        <ecNumber evidence="2">7.1.1.-</ecNumber>
    </recommendedName>
    <alternativeName>
        <fullName evidence="2">NADH dehydrogenase I subunit B 1</fullName>
    </alternativeName>
    <alternativeName>
        <fullName evidence="2">NDH-1 subunit B 1</fullName>
    </alternativeName>
</protein>
<reference key="1">
    <citation type="journal article" date="2004" name="Proc. Natl. Acad. Sci. U.S.A.">
        <title>Genomic plasticity of the causative agent of melioidosis, Burkholderia pseudomallei.</title>
        <authorList>
            <person name="Holden M.T.G."/>
            <person name="Titball R.W."/>
            <person name="Peacock S.J."/>
            <person name="Cerdeno-Tarraga A.-M."/>
            <person name="Atkins T."/>
            <person name="Crossman L.C."/>
            <person name="Pitt T."/>
            <person name="Churcher C."/>
            <person name="Mungall K.L."/>
            <person name="Bentley S.D."/>
            <person name="Sebaihia M."/>
            <person name="Thomson N.R."/>
            <person name="Bason N."/>
            <person name="Beacham I.R."/>
            <person name="Brooks K."/>
            <person name="Brown K.A."/>
            <person name="Brown N.F."/>
            <person name="Challis G.L."/>
            <person name="Cherevach I."/>
            <person name="Chillingworth T."/>
            <person name="Cronin A."/>
            <person name="Crossett B."/>
            <person name="Davis P."/>
            <person name="DeShazer D."/>
            <person name="Feltwell T."/>
            <person name="Fraser A."/>
            <person name="Hance Z."/>
            <person name="Hauser H."/>
            <person name="Holroyd S."/>
            <person name="Jagels K."/>
            <person name="Keith K.E."/>
            <person name="Maddison M."/>
            <person name="Moule S."/>
            <person name="Price C."/>
            <person name="Quail M.A."/>
            <person name="Rabbinowitsch E."/>
            <person name="Rutherford K."/>
            <person name="Sanders M."/>
            <person name="Simmonds M."/>
            <person name="Songsivilai S."/>
            <person name="Stevens K."/>
            <person name="Tumapa S."/>
            <person name="Vesaratchavest M."/>
            <person name="Whitehead S."/>
            <person name="Yeats C."/>
            <person name="Barrell B.G."/>
            <person name="Oyston P.C.F."/>
            <person name="Parkhill J."/>
        </authorList>
    </citation>
    <scope>NUCLEOTIDE SEQUENCE [LARGE SCALE GENOMIC DNA]</scope>
    <source>
        <strain>K96243</strain>
    </source>
</reference>
<comment type="function">
    <text evidence="1">NDH-1 shuttles electrons from NADH, via FMN and iron-sulfur (Fe-S) centers, to quinones in the respiratory chain. Couples the redox reaction to proton translocation (for every two electrons transferred, four hydrogen ions are translocated across the cytoplasmic membrane), and thus conserves the redox energy in a proton gradient (By similarity).</text>
</comment>
<comment type="catalytic activity">
    <reaction evidence="2">
        <text>a quinone + NADH + 5 H(+)(in) = a quinol + NAD(+) + 4 H(+)(out)</text>
        <dbReference type="Rhea" id="RHEA:57888"/>
        <dbReference type="ChEBI" id="CHEBI:15378"/>
        <dbReference type="ChEBI" id="CHEBI:24646"/>
        <dbReference type="ChEBI" id="CHEBI:57540"/>
        <dbReference type="ChEBI" id="CHEBI:57945"/>
        <dbReference type="ChEBI" id="CHEBI:132124"/>
    </reaction>
</comment>
<comment type="cofactor">
    <cofactor evidence="2">
        <name>[4Fe-4S] cluster</name>
        <dbReference type="ChEBI" id="CHEBI:49883"/>
    </cofactor>
    <text evidence="2">Binds 1 [4Fe-4S] cluster.</text>
</comment>
<comment type="subunit">
    <text evidence="2">NDH-1 is composed of 14 different subunits. Subunits NuoB, C, D, E, F, and G constitute the peripheral sector of the complex.</text>
</comment>
<comment type="subcellular location">
    <subcellularLocation>
        <location evidence="2">Cell inner membrane</location>
        <topology evidence="2">Peripheral membrane protein</topology>
        <orientation evidence="2">Cytoplasmic side</orientation>
    </subcellularLocation>
</comment>
<comment type="similarity">
    <text evidence="2">Belongs to the complex I 20 kDa subunit family.</text>
</comment>
<comment type="sequence caution" evidence="3">
    <conflict type="erroneous initiation">
        <sequence resource="EMBL-CDS" id="CAH35207"/>
    </conflict>
</comment>
<proteinExistence type="inferred from homology"/>
<evidence type="ECO:0000250" key="1"/>
<evidence type="ECO:0000255" key="2">
    <source>
        <dbReference type="HAMAP-Rule" id="MF_01356"/>
    </source>
</evidence>
<evidence type="ECO:0000305" key="3"/>
<gene>
    <name evidence="2" type="primary">nuoB1</name>
    <name type="ordered locus">BPSL1212</name>
</gene>
<sequence length="159" mass="17533">MSIEGVLKEGFVTTTADKLINWTRTGSLWPMTFGLACCAVEMMHAGAARYDLDRFGVVFRPSPRQSDVMIVAGTLCNKMAPALRRVYDQMAEPRWVISMGSCANGGGYYHYSYSVVRGCDRIVPVDVYVPGCPPTAEALVYGVIQLQAKIRRTSTIARQ</sequence>
<organism>
    <name type="scientific">Burkholderia pseudomallei (strain K96243)</name>
    <dbReference type="NCBI Taxonomy" id="272560"/>
    <lineage>
        <taxon>Bacteria</taxon>
        <taxon>Pseudomonadati</taxon>
        <taxon>Pseudomonadota</taxon>
        <taxon>Betaproteobacteria</taxon>
        <taxon>Burkholderiales</taxon>
        <taxon>Burkholderiaceae</taxon>
        <taxon>Burkholderia</taxon>
        <taxon>pseudomallei group</taxon>
    </lineage>
</organism>
<name>NUOB1_BURPS</name>
<dbReference type="EC" id="7.1.1.-" evidence="2"/>
<dbReference type="EMBL" id="BX571965">
    <property type="protein sequence ID" value="CAH35207.1"/>
    <property type="status" value="ALT_INIT"/>
    <property type="molecule type" value="Genomic_DNA"/>
</dbReference>
<dbReference type="RefSeq" id="WP_004186402.1">
    <property type="nucleotide sequence ID" value="NZ_CP009538.1"/>
</dbReference>
<dbReference type="RefSeq" id="YP_107834.1">
    <property type="nucleotide sequence ID" value="NC_006350.1"/>
</dbReference>
<dbReference type="SMR" id="Q63VN2"/>
<dbReference type="STRING" id="272560.BPSL1212"/>
<dbReference type="KEGG" id="bps:BPSL1212"/>
<dbReference type="PATRIC" id="fig|272560.51.peg.314"/>
<dbReference type="eggNOG" id="COG0377">
    <property type="taxonomic scope" value="Bacteria"/>
</dbReference>
<dbReference type="Proteomes" id="UP000000605">
    <property type="component" value="Chromosome 1"/>
</dbReference>
<dbReference type="GO" id="GO:0005886">
    <property type="term" value="C:plasma membrane"/>
    <property type="evidence" value="ECO:0007669"/>
    <property type="project" value="UniProtKB-SubCell"/>
</dbReference>
<dbReference type="GO" id="GO:0045271">
    <property type="term" value="C:respiratory chain complex I"/>
    <property type="evidence" value="ECO:0007669"/>
    <property type="project" value="TreeGrafter"/>
</dbReference>
<dbReference type="GO" id="GO:0051539">
    <property type="term" value="F:4 iron, 4 sulfur cluster binding"/>
    <property type="evidence" value="ECO:0007669"/>
    <property type="project" value="UniProtKB-KW"/>
</dbReference>
<dbReference type="GO" id="GO:0005506">
    <property type="term" value="F:iron ion binding"/>
    <property type="evidence" value="ECO:0007669"/>
    <property type="project" value="UniProtKB-UniRule"/>
</dbReference>
<dbReference type="GO" id="GO:0008137">
    <property type="term" value="F:NADH dehydrogenase (ubiquinone) activity"/>
    <property type="evidence" value="ECO:0007669"/>
    <property type="project" value="InterPro"/>
</dbReference>
<dbReference type="GO" id="GO:0050136">
    <property type="term" value="F:NADH:ubiquinone reductase (non-electrogenic) activity"/>
    <property type="evidence" value="ECO:0007669"/>
    <property type="project" value="UniProtKB-UniRule"/>
</dbReference>
<dbReference type="GO" id="GO:0048038">
    <property type="term" value="F:quinone binding"/>
    <property type="evidence" value="ECO:0007669"/>
    <property type="project" value="UniProtKB-KW"/>
</dbReference>
<dbReference type="GO" id="GO:0009060">
    <property type="term" value="P:aerobic respiration"/>
    <property type="evidence" value="ECO:0007669"/>
    <property type="project" value="TreeGrafter"/>
</dbReference>
<dbReference type="GO" id="GO:0015990">
    <property type="term" value="P:electron transport coupled proton transport"/>
    <property type="evidence" value="ECO:0007669"/>
    <property type="project" value="TreeGrafter"/>
</dbReference>
<dbReference type="FunFam" id="3.40.50.12280:FF:000001">
    <property type="entry name" value="NADH-quinone oxidoreductase subunit B 2"/>
    <property type="match status" value="1"/>
</dbReference>
<dbReference type="Gene3D" id="3.40.50.12280">
    <property type="match status" value="1"/>
</dbReference>
<dbReference type="HAMAP" id="MF_01356">
    <property type="entry name" value="NDH1_NuoB"/>
    <property type="match status" value="1"/>
</dbReference>
<dbReference type="InterPro" id="IPR006137">
    <property type="entry name" value="NADH_UbQ_OxRdtase-like_20kDa"/>
</dbReference>
<dbReference type="InterPro" id="IPR006138">
    <property type="entry name" value="NADH_UQ_OxRdtase_20Kd_su"/>
</dbReference>
<dbReference type="NCBIfam" id="TIGR01957">
    <property type="entry name" value="nuoB_fam"/>
    <property type="match status" value="1"/>
</dbReference>
<dbReference type="NCBIfam" id="NF005012">
    <property type="entry name" value="PRK06411.1"/>
    <property type="match status" value="1"/>
</dbReference>
<dbReference type="PANTHER" id="PTHR11995">
    <property type="entry name" value="NADH DEHYDROGENASE"/>
    <property type="match status" value="1"/>
</dbReference>
<dbReference type="PANTHER" id="PTHR11995:SF14">
    <property type="entry name" value="NADH DEHYDROGENASE [UBIQUINONE] IRON-SULFUR PROTEIN 7, MITOCHONDRIAL"/>
    <property type="match status" value="1"/>
</dbReference>
<dbReference type="Pfam" id="PF01058">
    <property type="entry name" value="Oxidored_q6"/>
    <property type="match status" value="1"/>
</dbReference>
<dbReference type="SUPFAM" id="SSF56770">
    <property type="entry name" value="HydA/Nqo6-like"/>
    <property type="match status" value="1"/>
</dbReference>
<dbReference type="PROSITE" id="PS01150">
    <property type="entry name" value="COMPLEX1_20K"/>
    <property type="match status" value="1"/>
</dbReference>